<comment type="function">
    <text evidence="1">Could be a regulator of the dopamine receptor signaling pathway.</text>
</comment>
<comment type="subunit">
    <text evidence="1">Interacts with DRD1.</text>
</comment>
<name>DRIP1_HUMAN</name>
<feature type="chain" id="PRO_0000274307" description="Dopamine receptor-interacting protein 1">
    <location>
        <begin position="1"/>
        <end position="310"/>
    </location>
</feature>
<evidence type="ECO:0000250" key="1">
    <source>
        <dbReference type="UniProtKB" id="Q4KL13"/>
    </source>
</evidence>
<evidence type="ECO:0000312" key="2">
    <source>
        <dbReference type="HGNC" id="HGNC:19834"/>
    </source>
</evidence>
<reference key="1">
    <citation type="submission" date="2000-03" db="EMBL/GenBank/DDBJ databases">
        <title>Cloning and characterization of DRIP1, a new protein that specifically interacts with the D1 dopamine receptor.</title>
        <authorList>
            <person name="Lafuente M.J."/>
            <person name="Nasir J."/>
        </authorList>
    </citation>
    <scope>NUCLEOTIDE SEQUENCE [MRNA]</scope>
</reference>
<reference key="2">
    <citation type="journal article" date="2004" name="Genome Res.">
        <title>The status, quality, and expansion of the NIH full-length cDNA project: the Mammalian Gene Collection (MGC).</title>
        <authorList>
            <consortium name="The MGC Project Team"/>
        </authorList>
    </citation>
    <scope>NUCLEOTIDE SEQUENCE [LARGE SCALE MRNA]</scope>
    <source>
        <tissue>Brain</tissue>
    </source>
</reference>
<accession>Q4W4Y0</accession>
<proteinExistence type="evidence at transcript level"/>
<organism>
    <name type="scientific">Homo sapiens</name>
    <name type="common">Human</name>
    <dbReference type="NCBI Taxonomy" id="9606"/>
    <lineage>
        <taxon>Eukaryota</taxon>
        <taxon>Metazoa</taxon>
        <taxon>Chordata</taxon>
        <taxon>Craniata</taxon>
        <taxon>Vertebrata</taxon>
        <taxon>Euteleostomi</taxon>
        <taxon>Mammalia</taxon>
        <taxon>Eutheria</taxon>
        <taxon>Euarchontoglires</taxon>
        <taxon>Primates</taxon>
        <taxon>Haplorrhini</taxon>
        <taxon>Catarrhini</taxon>
        <taxon>Hominidae</taxon>
        <taxon>Homo</taxon>
    </lineage>
</organism>
<dbReference type="EMBL" id="AF250395">
    <property type="protein sequence ID" value="AAQ14261.1"/>
    <property type="molecule type" value="mRNA"/>
</dbReference>
<dbReference type="EMBL" id="BC105030">
    <property type="protein sequence ID" value="AAI05031.1"/>
    <property type="molecule type" value="mRNA"/>
</dbReference>
<dbReference type="EMBL" id="BC105032">
    <property type="protein sequence ID" value="AAI05033.1"/>
    <property type="molecule type" value="mRNA"/>
</dbReference>
<dbReference type="CCDS" id="CCDS32069.1"/>
<dbReference type="RefSeq" id="NP_001017923.1">
    <property type="nucleotide sequence ID" value="NM_001017923.1"/>
</dbReference>
<dbReference type="FunCoup" id="Q4W4Y0">
    <property type="interactions" value="317"/>
</dbReference>
<dbReference type="STRING" id="9606.ENSP00000326846"/>
<dbReference type="iPTMnet" id="Q4W4Y0"/>
<dbReference type="PhosphoSitePlus" id="Q4W4Y0"/>
<dbReference type="BioMuta" id="C14orf28"/>
<dbReference type="DMDM" id="74754109"/>
<dbReference type="jPOST" id="Q4W4Y0"/>
<dbReference type="PaxDb" id="9606-ENSP00000326846"/>
<dbReference type="Antibodypedia" id="23419">
    <property type="antibodies" value="89 antibodies from 19 providers"/>
</dbReference>
<dbReference type="DNASU" id="122525"/>
<dbReference type="Ensembl" id="ENST00000325192.8">
    <property type="protein sequence ID" value="ENSP00000326846.3"/>
    <property type="gene ID" value="ENSG00000179476.8"/>
</dbReference>
<dbReference type="GeneID" id="122525"/>
<dbReference type="KEGG" id="hsa:122525"/>
<dbReference type="MANE-Select" id="ENST00000325192.8">
    <property type="protein sequence ID" value="ENSP00000326846.3"/>
    <property type="RefSeq nucleotide sequence ID" value="NM_001017923.2"/>
    <property type="RefSeq protein sequence ID" value="NP_001017923.1"/>
</dbReference>
<dbReference type="UCSC" id="uc001wvo.4">
    <property type="organism name" value="human"/>
</dbReference>
<dbReference type="AGR" id="HGNC:19834"/>
<dbReference type="CTD" id="122525"/>
<dbReference type="DisGeNET" id="122525"/>
<dbReference type="GeneCards" id="C14orf28"/>
<dbReference type="HGNC" id="HGNC:19834">
    <property type="gene designation" value="DORIP1"/>
</dbReference>
<dbReference type="HPA" id="ENSG00000179476">
    <property type="expression patterns" value="Low tissue specificity"/>
</dbReference>
<dbReference type="neXtProt" id="NX_Q4W4Y0"/>
<dbReference type="OpenTargets" id="ENSG00000179476"/>
<dbReference type="PharmGKB" id="PA134923136"/>
<dbReference type="VEuPathDB" id="HostDB:ENSG00000179476"/>
<dbReference type="eggNOG" id="ENOG502QSUZ">
    <property type="taxonomic scope" value="Eukaryota"/>
</dbReference>
<dbReference type="GeneTree" id="ENSGT00390000012377"/>
<dbReference type="InParanoid" id="Q4W4Y0"/>
<dbReference type="OMA" id="HDNFTRN"/>
<dbReference type="OrthoDB" id="8616706at2759"/>
<dbReference type="PAN-GO" id="Q4W4Y0">
    <property type="GO annotations" value="0 GO annotations based on evolutionary models"/>
</dbReference>
<dbReference type="PhylomeDB" id="Q4W4Y0"/>
<dbReference type="TreeFam" id="TF332440"/>
<dbReference type="PathwayCommons" id="Q4W4Y0"/>
<dbReference type="SignaLink" id="Q4W4Y0"/>
<dbReference type="BioGRID-ORCS" id="122525">
    <property type="hits" value="8 hits in 1112 CRISPR screens"/>
</dbReference>
<dbReference type="GenomeRNAi" id="122525"/>
<dbReference type="Pharos" id="Q4W4Y0">
    <property type="development level" value="Tbio"/>
</dbReference>
<dbReference type="PRO" id="PR:Q4W4Y0"/>
<dbReference type="Proteomes" id="UP000005640">
    <property type="component" value="Chromosome 14"/>
</dbReference>
<dbReference type="RNAct" id="Q4W4Y0">
    <property type="molecule type" value="protein"/>
</dbReference>
<dbReference type="Bgee" id="ENSG00000179476">
    <property type="expression patterns" value="Expressed in sperm and 181 other cell types or tissues"/>
</dbReference>
<dbReference type="ExpressionAtlas" id="Q4W4Y0">
    <property type="expression patterns" value="baseline and differential"/>
</dbReference>
<dbReference type="GO" id="GO:0019933">
    <property type="term" value="P:cAMP-mediated signaling"/>
    <property type="evidence" value="ECO:0007669"/>
    <property type="project" value="Ensembl"/>
</dbReference>
<dbReference type="GO" id="GO:0007212">
    <property type="term" value="P:G protein-coupled dopamine receptor signaling pathway"/>
    <property type="evidence" value="ECO:0007669"/>
    <property type="project" value="Ensembl"/>
</dbReference>
<dbReference type="GO" id="GO:0010467">
    <property type="term" value="P:gene expression"/>
    <property type="evidence" value="ECO:0007669"/>
    <property type="project" value="Ensembl"/>
</dbReference>
<dbReference type="GO" id="GO:0007613">
    <property type="term" value="P:memory"/>
    <property type="evidence" value="ECO:0007669"/>
    <property type="project" value="Ensembl"/>
</dbReference>
<dbReference type="GO" id="GO:0022008">
    <property type="term" value="P:neurogenesis"/>
    <property type="evidence" value="ECO:0007669"/>
    <property type="project" value="Ensembl"/>
</dbReference>
<dbReference type="GO" id="GO:0098989">
    <property type="term" value="P:NMDA selective glutamate receptor signaling pathway"/>
    <property type="evidence" value="ECO:0007669"/>
    <property type="project" value="Ensembl"/>
</dbReference>
<dbReference type="InterPro" id="IPR040029">
    <property type="entry name" value="C14orf28-like"/>
</dbReference>
<dbReference type="PANTHER" id="PTHR35350">
    <property type="entry name" value="HYPOTHETICAL LOC314168"/>
    <property type="match status" value="1"/>
</dbReference>
<dbReference type="PANTHER" id="PTHR35350:SF1">
    <property type="entry name" value="HYPOTHETICAL LOC314168"/>
    <property type="match status" value="1"/>
</dbReference>
<gene>
    <name evidence="2" type="primary">DORIP1</name>
    <name type="synonym">C14orf28</name>
    <name type="synonym">DRIP1</name>
</gene>
<protein>
    <recommendedName>
        <fullName>Dopamine receptor-interacting protein 1</fullName>
    </recommendedName>
</protein>
<keyword id="KW-1185">Reference proteome</keyword>
<sequence length="310" mass="36306">MKTLFEEIKASIKNNYNQDRSFCRPVLPWGGVFTIKAGRKAVSCTPLYVEIRLKNTCTIDGFLMLLYVILNENENFPRELSLHFGREFVDCFLYLMDTYSFTTVKLLWIWDKMEKQQYKSEVHKASLIIDLFGNEHDNFTKNLENLMSTIQESYCSNWRCPTRVQEDQQRTININPPQEIPHGNLIRLAVNELFCSKIELCEEHGCGGLREFSQRIFCHGAPPFVVLNMQHWKSEDLAYVPYYLDLSDHKYLLEGATLFNKEEHHYSAAFQIGGHWMHYDGLRNVNLILLNKPPEFLLLSSLVYIRATEK</sequence>